<feature type="chain" id="PRO_0000364846" description="Ferredoxin--NADP reductase">
    <location>
        <begin position="1"/>
        <end position="350"/>
    </location>
</feature>
<feature type="binding site" evidence="1">
    <location>
        <position position="49"/>
    </location>
    <ligand>
        <name>FAD</name>
        <dbReference type="ChEBI" id="CHEBI:57692"/>
    </ligand>
</feature>
<feature type="binding site" evidence="1">
    <location>
        <position position="57"/>
    </location>
    <ligand>
        <name>FAD</name>
        <dbReference type="ChEBI" id="CHEBI:57692"/>
    </ligand>
</feature>
<feature type="binding site" evidence="1">
    <location>
        <position position="62"/>
    </location>
    <ligand>
        <name>FAD</name>
        <dbReference type="ChEBI" id="CHEBI:57692"/>
    </ligand>
</feature>
<feature type="binding site" evidence="1">
    <location>
        <position position="102"/>
    </location>
    <ligand>
        <name>FAD</name>
        <dbReference type="ChEBI" id="CHEBI:57692"/>
    </ligand>
</feature>
<feature type="binding site" evidence="1">
    <location>
        <position position="136"/>
    </location>
    <ligand>
        <name>FAD</name>
        <dbReference type="ChEBI" id="CHEBI:57692"/>
    </ligand>
</feature>
<feature type="binding site" evidence="1">
    <location>
        <position position="303"/>
    </location>
    <ligand>
        <name>FAD</name>
        <dbReference type="ChEBI" id="CHEBI:57692"/>
    </ligand>
</feature>
<feature type="binding site" evidence="1">
    <location>
        <position position="344"/>
    </location>
    <ligand>
        <name>FAD</name>
        <dbReference type="ChEBI" id="CHEBI:57692"/>
    </ligand>
</feature>
<dbReference type="EC" id="1.18.1.2" evidence="1"/>
<dbReference type="EMBL" id="CP000394">
    <property type="protein sequence ID" value="ABI62904.1"/>
    <property type="status" value="ALT_INIT"/>
    <property type="molecule type" value="Genomic_DNA"/>
</dbReference>
<dbReference type="RefSeq" id="WP_025318528.1">
    <property type="nucleotide sequence ID" value="NC_008343.2"/>
</dbReference>
<dbReference type="SMR" id="Q0BQJ9"/>
<dbReference type="STRING" id="391165.GbCGDNIH1_2006"/>
<dbReference type="KEGG" id="gbe:GbCGDNIH1_2006"/>
<dbReference type="eggNOG" id="COG0492">
    <property type="taxonomic scope" value="Bacteria"/>
</dbReference>
<dbReference type="HOGENOM" id="CLU_031864_5_5_5"/>
<dbReference type="OrthoDB" id="9806179at2"/>
<dbReference type="Proteomes" id="UP000001963">
    <property type="component" value="Chromosome"/>
</dbReference>
<dbReference type="GO" id="GO:0004324">
    <property type="term" value="F:ferredoxin-NADP+ reductase activity"/>
    <property type="evidence" value="ECO:0007669"/>
    <property type="project" value="UniProtKB-UniRule"/>
</dbReference>
<dbReference type="GO" id="GO:0050660">
    <property type="term" value="F:flavin adenine dinucleotide binding"/>
    <property type="evidence" value="ECO:0007669"/>
    <property type="project" value="UniProtKB-UniRule"/>
</dbReference>
<dbReference type="GO" id="GO:0050661">
    <property type="term" value="F:NADP binding"/>
    <property type="evidence" value="ECO:0007669"/>
    <property type="project" value="UniProtKB-UniRule"/>
</dbReference>
<dbReference type="Gene3D" id="3.50.50.60">
    <property type="entry name" value="FAD/NAD(P)-binding domain"/>
    <property type="match status" value="2"/>
</dbReference>
<dbReference type="HAMAP" id="MF_01685">
    <property type="entry name" value="FENR2"/>
    <property type="match status" value="1"/>
</dbReference>
<dbReference type="InterPro" id="IPR036188">
    <property type="entry name" value="FAD/NAD-bd_sf"/>
</dbReference>
<dbReference type="InterPro" id="IPR023753">
    <property type="entry name" value="FAD/NAD-binding_dom"/>
</dbReference>
<dbReference type="InterPro" id="IPR022890">
    <property type="entry name" value="Fd--NADP_Rdtase_type_2"/>
</dbReference>
<dbReference type="InterPro" id="IPR050097">
    <property type="entry name" value="Ferredoxin-NADP_redctase_2"/>
</dbReference>
<dbReference type="PANTHER" id="PTHR48105">
    <property type="entry name" value="THIOREDOXIN REDUCTASE 1-RELATED-RELATED"/>
    <property type="match status" value="1"/>
</dbReference>
<dbReference type="Pfam" id="PF07992">
    <property type="entry name" value="Pyr_redox_2"/>
    <property type="match status" value="1"/>
</dbReference>
<dbReference type="PRINTS" id="PR00368">
    <property type="entry name" value="FADPNR"/>
</dbReference>
<dbReference type="PRINTS" id="PR00469">
    <property type="entry name" value="PNDRDTASEII"/>
</dbReference>
<dbReference type="SUPFAM" id="SSF51905">
    <property type="entry name" value="FAD/NAD(P)-binding domain"/>
    <property type="match status" value="1"/>
</dbReference>
<evidence type="ECO:0000255" key="1">
    <source>
        <dbReference type="HAMAP-Rule" id="MF_01685"/>
    </source>
</evidence>
<evidence type="ECO:0000305" key="2"/>
<name>FENR_GRABC</name>
<protein>
    <recommendedName>
        <fullName evidence="1">Ferredoxin--NADP reductase</fullName>
        <shortName evidence="1">FNR</shortName>
        <shortName evidence="1">Fd-NADP(+) reductase</shortName>
        <ecNumber evidence="1">1.18.1.2</ecNumber>
    </recommendedName>
</protein>
<sequence length="350" mass="37012">MTQIDLAPPASSTQPRIIDTDVAIIGAGPAGLFAAFELGMLRLRAVLIDALQEVGGQCAALYPEKPIYDIPAHPAISGGDLITALERQIAPFDMPRLLSRRVETLTGTQGDFTLTTSAGDTVCARAVVLAAGAGAFGPNRPPLDGLEAFEASGAVQYYVRRREDFRGRSVVIAGGGDSAVDWALALRGIAARIFVVHRRAKFRAAPESLAQLEQAAAAGEVELVVPYQLHGLQGAEGVLSVVEVATLDGEIRRLEADCLLPFFGLSMDLGPIAEWGLALERHHITIDPSRCETNVPGIFAIGDVATYPGKLKLILQGFSEAAMAAHAIHPIVHPDQALHFEYSTSTGVPG</sequence>
<comment type="catalytic activity">
    <reaction evidence="1">
        <text>2 reduced [2Fe-2S]-[ferredoxin] + NADP(+) + H(+) = 2 oxidized [2Fe-2S]-[ferredoxin] + NADPH</text>
        <dbReference type="Rhea" id="RHEA:20125"/>
        <dbReference type="Rhea" id="RHEA-COMP:10000"/>
        <dbReference type="Rhea" id="RHEA-COMP:10001"/>
        <dbReference type="ChEBI" id="CHEBI:15378"/>
        <dbReference type="ChEBI" id="CHEBI:33737"/>
        <dbReference type="ChEBI" id="CHEBI:33738"/>
        <dbReference type="ChEBI" id="CHEBI:57783"/>
        <dbReference type="ChEBI" id="CHEBI:58349"/>
        <dbReference type="EC" id="1.18.1.2"/>
    </reaction>
</comment>
<comment type="cofactor">
    <cofactor evidence="1">
        <name>FAD</name>
        <dbReference type="ChEBI" id="CHEBI:57692"/>
    </cofactor>
    <text evidence="1">Binds 1 FAD per subunit.</text>
</comment>
<comment type="subunit">
    <text evidence="1">Homodimer.</text>
</comment>
<comment type="similarity">
    <text evidence="1">Belongs to the ferredoxin--NADP reductase type 2 family.</text>
</comment>
<comment type="sequence caution" evidence="2">
    <conflict type="erroneous initiation">
        <sequence resource="EMBL-CDS" id="ABI62904"/>
    </conflict>
</comment>
<keyword id="KW-0274">FAD</keyword>
<keyword id="KW-0285">Flavoprotein</keyword>
<keyword id="KW-0521">NADP</keyword>
<keyword id="KW-0560">Oxidoreductase</keyword>
<keyword id="KW-1185">Reference proteome</keyword>
<accession>Q0BQJ9</accession>
<proteinExistence type="inferred from homology"/>
<reference key="1">
    <citation type="journal article" date="2007" name="J. Bacteriol.">
        <title>Genome sequence analysis of the emerging human pathogenic acetic acid bacterium Granulibacter bethesdensis.</title>
        <authorList>
            <person name="Greenberg D.E."/>
            <person name="Porcella S.F."/>
            <person name="Zelazny A.M."/>
            <person name="Virtaneva K."/>
            <person name="Sturdevant D.E."/>
            <person name="Kupko J.J. III"/>
            <person name="Barbian K.D."/>
            <person name="Babar A."/>
            <person name="Dorward D.W."/>
            <person name="Holland S.M."/>
        </authorList>
    </citation>
    <scope>NUCLEOTIDE SEQUENCE [LARGE SCALE GENOMIC DNA]</scope>
    <source>
        <strain>ATCC BAA-1260 / CGDNIH1</strain>
    </source>
</reference>
<organism>
    <name type="scientific">Granulibacter bethesdensis (strain ATCC BAA-1260 / CGDNIH1)</name>
    <dbReference type="NCBI Taxonomy" id="391165"/>
    <lineage>
        <taxon>Bacteria</taxon>
        <taxon>Pseudomonadati</taxon>
        <taxon>Pseudomonadota</taxon>
        <taxon>Alphaproteobacteria</taxon>
        <taxon>Acetobacterales</taxon>
        <taxon>Acetobacteraceae</taxon>
        <taxon>Granulibacter</taxon>
    </lineage>
</organism>
<gene>
    <name type="ordered locus">GbCGDNIH1_2006</name>
</gene>